<protein>
    <recommendedName>
        <fullName>DNA-binding protein HU-alpha</fullName>
    </recommendedName>
    <alternativeName>
        <fullName>HU-2</fullName>
    </alternativeName>
    <alternativeName>
        <fullName>NS2</fullName>
    </alternativeName>
</protein>
<comment type="function">
    <text evidence="1">Histone-like DNA-binding protein which is capable of wrapping DNA to stabilize it, and thus to prevent its denaturation under extreme environmental conditions.</text>
</comment>
<comment type="subunit">
    <text evidence="1">Heterodimer of an alpha and a beta chain.</text>
</comment>
<comment type="similarity">
    <text evidence="2">Belongs to the bacterial histone-like protein family.</text>
</comment>
<keyword id="KW-0226">DNA condensation</keyword>
<keyword id="KW-0238">DNA-binding</keyword>
<gene>
    <name type="primary">hupA</name>
    <name type="ordered locus">STY3715</name>
    <name type="ordered locus">t3461</name>
</gene>
<reference key="1">
    <citation type="journal article" date="2001" name="Nature">
        <title>Complete genome sequence of a multiple drug resistant Salmonella enterica serovar Typhi CT18.</title>
        <authorList>
            <person name="Parkhill J."/>
            <person name="Dougan G."/>
            <person name="James K.D."/>
            <person name="Thomson N.R."/>
            <person name="Pickard D."/>
            <person name="Wain J."/>
            <person name="Churcher C.M."/>
            <person name="Mungall K.L."/>
            <person name="Bentley S.D."/>
            <person name="Holden M.T.G."/>
            <person name="Sebaihia M."/>
            <person name="Baker S."/>
            <person name="Basham D."/>
            <person name="Brooks K."/>
            <person name="Chillingworth T."/>
            <person name="Connerton P."/>
            <person name="Cronin A."/>
            <person name="Davis P."/>
            <person name="Davies R.M."/>
            <person name="Dowd L."/>
            <person name="White N."/>
            <person name="Farrar J."/>
            <person name="Feltwell T."/>
            <person name="Hamlin N."/>
            <person name="Haque A."/>
            <person name="Hien T.T."/>
            <person name="Holroyd S."/>
            <person name="Jagels K."/>
            <person name="Krogh A."/>
            <person name="Larsen T.S."/>
            <person name="Leather S."/>
            <person name="Moule S."/>
            <person name="O'Gaora P."/>
            <person name="Parry C."/>
            <person name="Quail M.A."/>
            <person name="Rutherford K.M."/>
            <person name="Simmonds M."/>
            <person name="Skelton J."/>
            <person name="Stevens K."/>
            <person name="Whitehead S."/>
            <person name="Barrell B.G."/>
        </authorList>
    </citation>
    <scope>NUCLEOTIDE SEQUENCE [LARGE SCALE GENOMIC DNA]</scope>
    <source>
        <strain>CT18</strain>
    </source>
</reference>
<reference key="2">
    <citation type="journal article" date="2003" name="J. Bacteriol.">
        <title>Comparative genomics of Salmonella enterica serovar Typhi strains Ty2 and CT18.</title>
        <authorList>
            <person name="Deng W."/>
            <person name="Liou S.-R."/>
            <person name="Plunkett G. III"/>
            <person name="Mayhew G.F."/>
            <person name="Rose D.J."/>
            <person name="Burland V."/>
            <person name="Kodoyianni V."/>
            <person name="Schwartz D.C."/>
            <person name="Blattner F.R."/>
        </authorList>
    </citation>
    <scope>NUCLEOTIDE SEQUENCE [LARGE SCALE GENOMIC DNA]</scope>
    <source>
        <strain>ATCC 700931 / Ty2</strain>
    </source>
</reference>
<proteinExistence type="inferred from homology"/>
<dbReference type="EMBL" id="AL513382">
    <property type="protein sequence ID" value="CAD09474.1"/>
    <property type="molecule type" value="Genomic_DNA"/>
</dbReference>
<dbReference type="EMBL" id="AE014613">
    <property type="protein sequence ID" value="AAO70977.1"/>
    <property type="molecule type" value="Genomic_DNA"/>
</dbReference>
<dbReference type="RefSeq" id="NP_457904.1">
    <property type="nucleotide sequence ID" value="NC_003198.1"/>
</dbReference>
<dbReference type="RefSeq" id="WP_001044509.1">
    <property type="nucleotide sequence ID" value="NZ_WSUR01000043.1"/>
</dbReference>
<dbReference type="SMR" id="P0A1R7"/>
<dbReference type="STRING" id="220341.gene:17587575"/>
<dbReference type="GeneID" id="98391144"/>
<dbReference type="KEGG" id="stt:t3461"/>
<dbReference type="KEGG" id="sty:STY3715"/>
<dbReference type="PATRIC" id="fig|220341.7.peg.3787"/>
<dbReference type="eggNOG" id="COG0776">
    <property type="taxonomic scope" value="Bacteria"/>
</dbReference>
<dbReference type="HOGENOM" id="CLU_105066_3_1_6"/>
<dbReference type="OMA" id="ISQEKQC"/>
<dbReference type="OrthoDB" id="9799835at2"/>
<dbReference type="Proteomes" id="UP000000541">
    <property type="component" value="Chromosome"/>
</dbReference>
<dbReference type="Proteomes" id="UP000002670">
    <property type="component" value="Chromosome"/>
</dbReference>
<dbReference type="GO" id="GO:0005829">
    <property type="term" value="C:cytosol"/>
    <property type="evidence" value="ECO:0007669"/>
    <property type="project" value="TreeGrafter"/>
</dbReference>
<dbReference type="GO" id="GO:0003677">
    <property type="term" value="F:DNA binding"/>
    <property type="evidence" value="ECO:0007669"/>
    <property type="project" value="UniProtKB-KW"/>
</dbReference>
<dbReference type="GO" id="GO:0030527">
    <property type="term" value="F:structural constituent of chromatin"/>
    <property type="evidence" value="ECO:0007669"/>
    <property type="project" value="InterPro"/>
</dbReference>
<dbReference type="GO" id="GO:0030261">
    <property type="term" value="P:chromosome condensation"/>
    <property type="evidence" value="ECO:0007669"/>
    <property type="project" value="UniProtKB-KW"/>
</dbReference>
<dbReference type="CDD" id="cd13831">
    <property type="entry name" value="HU"/>
    <property type="match status" value="1"/>
</dbReference>
<dbReference type="FunFam" id="4.10.520.10:FF:000001">
    <property type="entry name" value="DNA-binding protein HU"/>
    <property type="match status" value="1"/>
</dbReference>
<dbReference type="Gene3D" id="4.10.520.10">
    <property type="entry name" value="IHF-like DNA-binding proteins"/>
    <property type="match status" value="1"/>
</dbReference>
<dbReference type="InterPro" id="IPR000119">
    <property type="entry name" value="Hist_DNA-bd"/>
</dbReference>
<dbReference type="InterPro" id="IPR020816">
    <property type="entry name" value="Histone-like_DNA-bd_CS"/>
</dbReference>
<dbReference type="InterPro" id="IPR010992">
    <property type="entry name" value="IHF-like_DNA-bd_dom_sf"/>
</dbReference>
<dbReference type="NCBIfam" id="NF008023">
    <property type="entry name" value="PRK10753.1"/>
    <property type="match status" value="1"/>
</dbReference>
<dbReference type="PANTHER" id="PTHR33175">
    <property type="entry name" value="DNA-BINDING PROTEIN HU"/>
    <property type="match status" value="1"/>
</dbReference>
<dbReference type="PANTHER" id="PTHR33175:SF12">
    <property type="entry name" value="DNA-BINDING PROTEIN HU-ALPHA"/>
    <property type="match status" value="1"/>
</dbReference>
<dbReference type="Pfam" id="PF00216">
    <property type="entry name" value="Bac_DNA_binding"/>
    <property type="match status" value="1"/>
</dbReference>
<dbReference type="PRINTS" id="PR01727">
    <property type="entry name" value="DNABINDINGHU"/>
</dbReference>
<dbReference type="SMART" id="SM00411">
    <property type="entry name" value="BHL"/>
    <property type="match status" value="1"/>
</dbReference>
<dbReference type="SUPFAM" id="SSF47729">
    <property type="entry name" value="IHF-like DNA-binding proteins"/>
    <property type="match status" value="1"/>
</dbReference>
<dbReference type="PROSITE" id="PS00045">
    <property type="entry name" value="HISTONE_LIKE"/>
    <property type="match status" value="1"/>
</dbReference>
<evidence type="ECO:0000250" key="1"/>
<evidence type="ECO:0000305" key="2"/>
<sequence>MNKTQLIDVIADKAELSKTQAKAALESTLAAITESLKEGDAVQLVGFGTFKVNHRAERTGRNPQTGKEIKIAAANVPAFVSGKALKDAVK</sequence>
<accession>P0A1R7</accession>
<accession>P15148</accession>
<organism>
    <name type="scientific">Salmonella typhi</name>
    <dbReference type="NCBI Taxonomy" id="90370"/>
    <lineage>
        <taxon>Bacteria</taxon>
        <taxon>Pseudomonadati</taxon>
        <taxon>Pseudomonadota</taxon>
        <taxon>Gammaproteobacteria</taxon>
        <taxon>Enterobacterales</taxon>
        <taxon>Enterobacteriaceae</taxon>
        <taxon>Salmonella</taxon>
    </lineage>
</organism>
<name>DBHA_SALTI</name>
<feature type="chain" id="PRO_0000104968" description="DNA-binding protein HU-alpha">
    <location>
        <begin position="1"/>
        <end position="90"/>
    </location>
</feature>